<keyword id="KW-0002">3D-structure</keyword>
<keyword id="KW-0903">Direct protein sequencing</keyword>
<keyword id="KW-0325">Glycoprotein</keyword>
<keyword id="KW-0326">Glycosidase</keyword>
<keyword id="KW-0378">Hydrolase</keyword>
<keyword id="KW-0964">Secreted</keyword>
<keyword id="KW-0732">Signal</keyword>
<proteinExistence type="evidence at protein level"/>
<reference key="1">
    <citation type="journal article" date="1996" name="Yeast">
        <title>Cloning of the Penicillium minioluteum gene encoding dextranase and its expression in Pichia pastoris.</title>
        <authorList>
            <person name="Roca H."/>
            <person name="Garcia B.M."/>
            <person name="Rodriguez E."/>
            <person name="Mateu D."/>
            <person name="Coroas L."/>
            <person name="Cremata J.A."/>
            <person name="Garcia R."/>
            <person name="Pons T."/>
            <person name="Delgado J."/>
        </authorList>
    </citation>
    <scope>NUCLEOTIDE SEQUENCE [GENOMIC DNA]</scope>
    <scope>PROTEIN SEQUENCE OF 35-50</scope>
    <source>
        <strain>Sp. Dierckx / MUCL 38929</strain>
    </source>
</reference>
<evidence type="ECO:0000255" key="1"/>
<evidence type="ECO:0000269" key="2">
    <source>
    </source>
</evidence>
<evidence type="ECO:0000305" key="3"/>
<evidence type="ECO:0007829" key="4">
    <source>
        <dbReference type="PDB" id="1OGO"/>
    </source>
</evidence>
<name>DEXT_TALMI</name>
<feature type="signal peptide" evidence="1">
    <location>
        <begin position="1"/>
        <end position="19"/>
    </location>
</feature>
<feature type="propeptide" id="PRO_0000012213" evidence="2">
    <location>
        <begin position="20"/>
        <end position="34"/>
    </location>
</feature>
<feature type="chain" id="PRO_0000012214" description="Dextranase">
    <location>
        <begin position="35"/>
        <end position="608"/>
    </location>
</feature>
<feature type="glycosylation site" description="N-linked (GlcNAc...) asparagine" evidence="1">
    <location>
        <position position="39"/>
    </location>
</feature>
<feature type="glycosylation site" description="N-linked (GlcNAc...) asparagine" evidence="1">
    <location>
        <position position="571"/>
    </location>
</feature>
<feature type="glycosylation site" description="N-linked (GlcNAc...) asparagine" evidence="1">
    <location>
        <position position="574"/>
    </location>
</feature>
<feature type="strand" evidence="4">
    <location>
        <begin position="43"/>
        <end position="48"/>
    </location>
</feature>
<feature type="strand" evidence="4">
    <location>
        <begin position="59"/>
        <end position="61"/>
    </location>
</feature>
<feature type="strand" evidence="4">
    <location>
        <begin position="68"/>
        <end position="70"/>
    </location>
</feature>
<feature type="strand" evidence="4">
    <location>
        <begin position="72"/>
        <end position="80"/>
    </location>
</feature>
<feature type="strand" evidence="4">
    <location>
        <begin position="87"/>
        <end position="89"/>
    </location>
</feature>
<feature type="strand" evidence="4">
    <location>
        <begin position="92"/>
        <end position="94"/>
    </location>
</feature>
<feature type="helix" evidence="4">
    <location>
        <begin position="96"/>
        <end position="99"/>
    </location>
</feature>
<feature type="helix" evidence="4">
    <location>
        <begin position="126"/>
        <end position="129"/>
    </location>
</feature>
<feature type="strand" evidence="4">
    <location>
        <begin position="132"/>
        <end position="142"/>
    </location>
</feature>
<feature type="strand" evidence="4">
    <location>
        <begin position="144"/>
        <end position="150"/>
    </location>
</feature>
<feature type="helix" evidence="4">
    <location>
        <begin position="159"/>
        <end position="161"/>
    </location>
</feature>
<feature type="strand" evidence="4">
    <location>
        <begin position="162"/>
        <end position="166"/>
    </location>
</feature>
<feature type="strand" evidence="4">
    <location>
        <begin position="172"/>
        <end position="175"/>
    </location>
</feature>
<feature type="strand" evidence="4">
    <location>
        <begin position="181"/>
        <end position="185"/>
    </location>
</feature>
<feature type="strand" evidence="4">
    <location>
        <begin position="192"/>
        <end position="198"/>
    </location>
</feature>
<feature type="helix" evidence="4">
    <location>
        <begin position="199"/>
        <end position="201"/>
    </location>
</feature>
<feature type="strand" evidence="4">
    <location>
        <begin position="202"/>
        <end position="207"/>
    </location>
</feature>
<feature type="strand" evidence="4">
    <location>
        <begin position="209"/>
        <end position="234"/>
    </location>
</feature>
<feature type="helix" evidence="4">
    <location>
        <begin position="238"/>
        <end position="240"/>
    </location>
</feature>
<feature type="turn" evidence="4">
    <location>
        <begin position="246"/>
        <end position="248"/>
    </location>
</feature>
<feature type="strand" evidence="4">
    <location>
        <begin position="249"/>
        <end position="251"/>
    </location>
</feature>
<feature type="strand" evidence="4">
    <location>
        <begin position="254"/>
        <end position="257"/>
    </location>
</feature>
<feature type="turn" evidence="4">
    <location>
        <begin position="259"/>
        <end position="262"/>
    </location>
</feature>
<feature type="strand" evidence="4">
    <location>
        <begin position="264"/>
        <end position="270"/>
    </location>
</feature>
<feature type="strand" evidence="4">
    <location>
        <begin position="272"/>
        <end position="277"/>
    </location>
</feature>
<feature type="strand" evidence="4">
    <location>
        <begin position="288"/>
        <end position="290"/>
    </location>
</feature>
<feature type="strand" evidence="4">
    <location>
        <begin position="301"/>
        <end position="304"/>
    </location>
</feature>
<feature type="strand" evidence="4">
    <location>
        <begin position="308"/>
        <end position="312"/>
    </location>
</feature>
<feature type="strand" evidence="4">
    <location>
        <begin position="314"/>
        <end position="316"/>
    </location>
</feature>
<feature type="strand" evidence="4">
    <location>
        <begin position="322"/>
        <end position="327"/>
    </location>
</feature>
<feature type="strand" evidence="4">
    <location>
        <begin position="329"/>
        <end position="331"/>
    </location>
</feature>
<feature type="turn" evidence="4">
    <location>
        <begin position="341"/>
        <end position="345"/>
    </location>
</feature>
<feature type="turn" evidence="4">
    <location>
        <begin position="351"/>
        <end position="353"/>
    </location>
</feature>
<feature type="strand" evidence="4">
    <location>
        <begin position="357"/>
        <end position="360"/>
    </location>
</feature>
<feature type="strand" evidence="4">
    <location>
        <begin position="365"/>
        <end position="373"/>
    </location>
</feature>
<feature type="strand" evidence="4">
    <location>
        <begin position="375"/>
        <end position="377"/>
    </location>
</feature>
<feature type="strand" evidence="4">
    <location>
        <begin position="383"/>
        <end position="386"/>
    </location>
</feature>
<feature type="strand" evidence="4">
    <location>
        <begin position="388"/>
        <end position="390"/>
    </location>
</feature>
<feature type="strand" evidence="4">
    <location>
        <begin position="392"/>
        <end position="402"/>
    </location>
</feature>
<feature type="strand" evidence="4">
    <location>
        <begin position="419"/>
        <end position="429"/>
    </location>
</feature>
<feature type="strand" evidence="4">
    <location>
        <begin position="431"/>
        <end position="433"/>
    </location>
</feature>
<feature type="strand" evidence="4">
    <location>
        <begin position="440"/>
        <end position="448"/>
    </location>
</feature>
<feature type="strand" evidence="4">
    <location>
        <begin position="450"/>
        <end position="452"/>
    </location>
</feature>
<feature type="strand" evidence="4">
    <location>
        <begin position="454"/>
        <end position="456"/>
    </location>
</feature>
<feature type="strand" evidence="4">
    <location>
        <begin position="464"/>
        <end position="476"/>
    </location>
</feature>
<feature type="turn" evidence="4">
    <location>
        <begin position="484"/>
        <end position="487"/>
    </location>
</feature>
<feature type="strand" evidence="4">
    <location>
        <begin position="489"/>
        <end position="493"/>
    </location>
</feature>
<feature type="strand" evidence="4">
    <location>
        <begin position="497"/>
        <end position="500"/>
    </location>
</feature>
<feature type="strand" evidence="4">
    <location>
        <begin position="504"/>
        <end position="518"/>
    </location>
</feature>
<feature type="strand" evidence="4">
    <location>
        <begin position="520"/>
        <end position="522"/>
    </location>
</feature>
<feature type="strand" evidence="4">
    <location>
        <begin position="524"/>
        <end position="528"/>
    </location>
</feature>
<feature type="strand" evidence="4">
    <location>
        <begin position="531"/>
        <end position="544"/>
    </location>
</feature>
<feature type="strand" evidence="4">
    <location>
        <begin position="558"/>
        <end position="560"/>
    </location>
</feature>
<feature type="strand" evidence="4">
    <location>
        <begin position="568"/>
        <end position="577"/>
    </location>
</feature>
<feature type="turn" evidence="4">
    <location>
        <begin position="584"/>
        <end position="586"/>
    </location>
</feature>
<feature type="strand" evidence="4">
    <location>
        <begin position="591"/>
        <end position="593"/>
    </location>
</feature>
<feature type="strand" evidence="4">
    <location>
        <begin position="595"/>
        <end position="597"/>
    </location>
</feature>
<feature type="helix" evidence="4">
    <location>
        <begin position="599"/>
        <end position="601"/>
    </location>
</feature>
<feature type="turn" evidence="4">
    <location>
        <begin position="602"/>
        <end position="604"/>
    </location>
</feature>
<feature type="strand" evidence="4">
    <location>
        <begin position="606"/>
        <end position="608"/>
    </location>
</feature>
<dbReference type="EC" id="3.2.1.11"/>
<dbReference type="EMBL" id="L41562">
    <property type="protein sequence ID" value="AAB47720.1"/>
    <property type="molecule type" value="Genomic_DNA"/>
</dbReference>
<dbReference type="PIR" id="S72177">
    <property type="entry name" value="S72177"/>
</dbReference>
<dbReference type="PDB" id="1OGM">
    <property type="method" value="X-ray"/>
    <property type="resolution" value="1.80 A"/>
    <property type="chains" value="X=35-608"/>
</dbReference>
<dbReference type="PDB" id="1OGO">
    <property type="method" value="X-ray"/>
    <property type="resolution" value="1.65 A"/>
    <property type="chains" value="X=35-608"/>
</dbReference>
<dbReference type="PDBsum" id="1OGM"/>
<dbReference type="PDBsum" id="1OGO"/>
<dbReference type="SMR" id="P48845"/>
<dbReference type="CAZy" id="GH49">
    <property type="family name" value="Glycoside Hydrolase Family 49"/>
</dbReference>
<dbReference type="GlyCosmos" id="P48845">
    <property type="glycosylation" value="3 sites, No reported glycans"/>
</dbReference>
<dbReference type="BRENDA" id="3.2.1.11">
    <property type="organism ID" value="7460"/>
</dbReference>
<dbReference type="EvolutionaryTrace" id="P48845"/>
<dbReference type="GO" id="GO:0005576">
    <property type="term" value="C:extracellular region"/>
    <property type="evidence" value="ECO:0007669"/>
    <property type="project" value="UniProtKB-SubCell"/>
</dbReference>
<dbReference type="GO" id="GO:0033904">
    <property type="term" value="F:dextranase activity"/>
    <property type="evidence" value="ECO:0007669"/>
    <property type="project" value="UniProtKB-EC"/>
</dbReference>
<dbReference type="Gene3D" id="2.60.350.10">
    <property type="entry name" value="Dextranase, N-terminal"/>
    <property type="match status" value="1"/>
</dbReference>
<dbReference type="Gene3D" id="2.160.20.10">
    <property type="entry name" value="Single-stranded right-handed beta-helix, Pectin lyase-like"/>
    <property type="match status" value="1"/>
</dbReference>
<dbReference type="InterPro" id="IPR041402">
    <property type="entry name" value="B_solenoid_dext"/>
</dbReference>
<dbReference type="InterPro" id="IPR035953">
    <property type="entry name" value="Dextranase_N-ter"/>
</dbReference>
<dbReference type="InterPro" id="IPR005192">
    <property type="entry name" value="Glyco_hydro_49_C"/>
</dbReference>
<dbReference type="InterPro" id="IPR023226">
    <property type="entry name" value="Glyco_hydro_49_N_dom"/>
</dbReference>
<dbReference type="InterPro" id="IPR041274">
    <property type="entry name" value="IPU_b_solenoid"/>
</dbReference>
<dbReference type="InterPro" id="IPR012334">
    <property type="entry name" value="Pectin_lyas_fold"/>
</dbReference>
<dbReference type="InterPro" id="IPR011050">
    <property type="entry name" value="Pectin_lyase_fold/virulence"/>
</dbReference>
<dbReference type="Pfam" id="PF18841">
    <property type="entry name" value="B_solenoid_dext"/>
    <property type="match status" value="1"/>
</dbReference>
<dbReference type="Pfam" id="PF03718">
    <property type="entry name" value="Glyco_hydro_49"/>
    <property type="match status" value="1"/>
</dbReference>
<dbReference type="Pfam" id="PF17433">
    <property type="entry name" value="Glyco_hydro_49N"/>
    <property type="match status" value="1"/>
</dbReference>
<dbReference type="Pfam" id="PF18783">
    <property type="entry name" value="IPU_b_solenoid"/>
    <property type="match status" value="1"/>
</dbReference>
<dbReference type="SUPFAM" id="SSF101596">
    <property type="entry name" value="Dextranase, N-terminal domain"/>
    <property type="match status" value="1"/>
</dbReference>
<dbReference type="SUPFAM" id="SSF51126">
    <property type="entry name" value="Pectin lyase-like"/>
    <property type="match status" value="1"/>
</dbReference>
<comment type="catalytic activity">
    <reaction>
        <text>Endohydrolysis of (1-&gt;6)-alpha-D-glucosidic linkages in dextran.</text>
        <dbReference type="EC" id="3.2.1.11"/>
    </reaction>
</comment>
<comment type="subcellular location">
    <subcellularLocation>
        <location>Secreted</location>
    </subcellularLocation>
</comment>
<comment type="PTM">
    <text>N-glycosylated.</text>
</comment>
<comment type="similarity">
    <text evidence="3">Belongs to the glycosyl hydrolase 49 family.</text>
</comment>
<sequence>MATMLKLLALTLAISESAIGAVMHPPGNSHPGTHMGTTNNTHCGADFCTWWHDSGEINTQTPVQPGNVRQSHKYSVQVSLAGTNNFHDSFVYESIPRNGNGRIYAPTDPPNSNTLDSSVDDGISIEPSIGLNMAWSQFEYSHDVDVKILATDGSSLGSPSDVVIRPVSISYAISQSDDGGIVIRVPADANGRKFSVEFKTDLYTFLSDGNEYVTSGGSVVGVEPTNALVIFASPFLPSGMIPHMTPDNTQTMTPGPINNGDWGAKSILYFPPGVYWMNQDQSGNSGKLGSNHIRLNSNTYWVYLAPGAYVKGAIEYFTKQNFYATGHGILSGENYVYQANAGDNYIAVKSDSTSLRMWWHNNLGGGQTWYCVGPTINAPPFNTMDFNGNSGISSQISDYKQVGAFFFQTDGPEIYPNSVVHDVFWHVNDDAIKIYYSGASVSRATIWKCHNDPIIQMGWTSRDISGVTIDTLNVIHTRYIKSETVVPSAIIGASPFYASGMSPDSRKSISMTVSNVVCEGLCPSLFRITPLQNYKNFVVKNVAFPDGLQTNSIGTGESIIPAASGLTMGLNISNWTVGGQKVTMENFQANSLGQFNIDGSYWGEWQIS</sequence>
<accession>P48845</accession>
<organism>
    <name type="scientific">Talaromyces minioluteus</name>
    <name type="common">Filamentous fungus</name>
    <name type="synonym">Penicillium minioluteum</name>
    <dbReference type="NCBI Taxonomy" id="28574"/>
    <lineage>
        <taxon>Eukaryota</taxon>
        <taxon>Fungi</taxon>
        <taxon>Dikarya</taxon>
        <taxon>Ascomycota</taxon>
        <taxon>Pezizomycotina</taxon>
        <taxon>Eurotiomycetes</taxon>
        <taxon>Eurotiomycetidae</taxon>
        <taxon>Eurotiales</taxon>
        <taxon>Trichocomaceae</taxon>
        <taxon>Talaromyces</taxon>
        <taxon>Talaromyces sect. Trachyspermi</taxon>
    </lineage>
</organism>
<gene>
    <name type="primary">DEX</name>
</gene>
<protein>
    <recommendedName>
        <fullName>Dextranase</fullName>
        <ecNumber>3.2.1.11</ecNumber>
    </recommendedName>
    <alternativeName>
        <fullName>Alpha-1,6-glucan-6-glucanohydrolase</fullName>
    </alternativeName>
</protein>